<dbReference type="EMBL" id="AE004091">
    <property type="protein sequence ID" value="AAG08184.1"/>
    <property type="molecule type" value="Genomic_DNA"/>
</dbReference>
<dbReference type="PIR" id="C83045">
    <property type="entry name" value="C83045"/>
</dbReference>
<dbReference type="RefSeq" id="NP_253486.1">
    <property type="nucleotide sequence ID" value="NC_002516.2"/>
</dbReference>
<dbReference type="RefSeq" id="WP_003114631.1">
    <property type="nucleotide sequence ID" value="NZ_QZGE01000002.1"/>
</dbReference>
<dbReference type="SMR" id="Q9HV11"/>
<dbReference type="STRING" id="208964.PA4798"/>
<dbReference type="PaxDb" id="208964-PA4798"/>
<dbReference type="DNASU" id="880408"/>
<dbReference type="GeneID" id="880408"/>
<dbReference type="KEGG" id="pae:PA4798"/>
<dbReference type="PATRIC" id="fig|208964.12.peg.5026"/>
<dbReference type="PseudoCAP" id="PA4798"/>
<dbReference type="HOGENOM" id="CLU_086407_3_0_6"/>
<dbReference type="InParanoid" id="Q9HV11"/>
<dbReference type="OrthoDB" id="9799092at2"/>
<dbReference type="PhylomeDB" id="Q9HV11"/>
<dbReference type="BioCyc" id="PAER208964:G1FZ6-4911-MONOMER"/>
<dbReference type="Proteomes" id="UP000002438">
    <property type="component" value="Chromosome"/>
</dbReference>
<dbReference type="Gene3D" id="3.30.460.10">
    <property type="entry name" value="Beta Polymerase, domain 2"/>
    <property type="match status" value="1"/>
</dbReference>
<dbReference type="InterPro" id="IPR007344">
    <property type="entry name" value="GrpB/CoaE"/>
</dbReference>
<dbReference type="InterPro" id="IPR043519">
    <property type="entry name" value="NT_sf"/>
</dbReference>
<dbReference type="PANTHER" id="PTHR34822">
    <property type="entry name" value="GRPB DOMAIN PROTEIN (AFU_ORTHOLOGUE AFUA_1G01530)"/>
    <property type="match status" value="1"/>
</dbReference>
<dbReference type="PANTHER" id="PTHR34822:SF1">
    <property type="entry name" value="GRPB FAMILY PROTEIN"/>
    <property type="match status" value="1"/>
</dbReference>
<dbReference type="Pfam" id="PF04229">
    <property type="entry name" value="GrpB"/>
    <property type="match status" value="1"/>
</dbReference>
<dbReference type="SUPFAM" id="SSF81301">
    <property type="entry name" value="Nucleotidyltransferase"/>
    <property type="match status" value="1"/>
</dbReference>
<gene>
    <name type="ordered locus">PA4798</name>
</gene>
<sequence length="242" mass="27090">MSSPQPPRFDGQRWSNADDDRIEVLPADPAWPQHFAAEAEAIRTALALPGLGIEHVGSTAVPGLDAKPIIDILLLPPPGHDPQRLVAPLEGLGYQFWRENPNTQRMFFVKGMPPFGHGRTHHVHVMPLAQADRYLLFRDWLRNHPDDARLYAETKHALARRYPTDREAYTRGKDEVVARILGRALAATRHPMIQSGLVRGEREMHARELRETLVAGAESTPGGPADTAYFESLRSRVSKPQD</sequence>
<name>Y4798_PSEAE</name>
<protein>
    <recommendedName>
        <fullName>UPF0157 protein PA4798</fullName>
    </recommendedName>
</protein>
<keyword id="KW-1185">Reference proteome</keyword>
<proteinExistence type="inferred from homology"/>
<evidence type="ECO:0000256" key="1">
    <source>
        <dbReference type="SAM" id="MobiDB-lite"/>
    </source>
</evidence>
<evidence type="ECO:0000305" key="2"/>
<accession>Q9HV11</accession>
<comment type="similarity">
    <text evidence="2">Belongs to the UPF0157 (GrpB) family.</text>
</comment>
<reference key="1">
    <citation type="journal article" date="2000" name="Nature">
        <title>Complete genome sequence of Pseudomonas aeruginosa PAO1, an opportunistic pathogen.</title>
        <authorList>
            <person name="Stover C.K."/>
            <person name="Pham X.-Q.T."/>
            <person name="Erwin A.L."/>
            <person name="Mizoguchi S.D."/>
            <person name="Warrener P."/>
            <person name="Hickey M.J."/>
            <person name="Brinkman F.S.L."/>
            <person name="Hufnagle W.O."/>
            <person name="Kowalik D.J."/>
            <person name="Lagrou M."/>
            <person name="Garber R.L."/>
            <person name="Goltry L."/>
            <person name="Tolentino E."/>
            <person name="Westbrock-Wadman S."/>
            <person name="Yuan Y."/>
            <person name="Brody L.L."/>
            <person name="Coulter S.N."/>
            <person name="Folger K.R."/>
            <person name="Kas A."/>
            <person name="Larbig K."/>
            <person name="Lim R.M."/>
            <person name="Smith K.A."/>
            <person name="Spencer D.H."/>
            <person name="Wong G.K.-S."/>
            <person name="Wu Z."/>
            <person name="Paulsen I.T."/>
            <person name="Reizer J."/>
            <person name="Saier M.H. Jr."/>
            <person name="Hancock R.E.W."/>
            <person name="Lory S."/>
            <person name="Olson M.V."/>
        </authorList>
    </citation>
    <scope>NUCLEOTIDE SEQUENCE [LARGE SCALE GENOMIC DNA]</scope>
    <source>
        <strain>ATCC 15692 / DSM 22644 / CIP 104116 / JCM 14847 / LMG 12228 / 1C / PRS 101 / PAO1</strain>
    </source>
</reference>
<organism>
    <name type="scientific">Pseudomonas aeruginosa (strain ATCC 15692 / DSM 22644 / CIP 104116 / JCM 14847 / LMG 12228 / 1C / PRS 101 / PAO1)</name>
    <dbReference type="NCBI Taxonomy" id="208964"/>
    <lineage>
        <taxon>Bacteria</taxon>
        <taxon>Pseudomonadati</taxon>
        <taxon>Pseudomonadota</taxon>
        <taxon>Gammaproteobacteria</taxon>
        <taxon>Pseudomonadales</taxon>
        <taxon>Pseudomonadaceae</taxon>
        <taxon>Pseudomonas</taxon>
    </lineage>
</organism>
<feature type="chain" id="PRO_0000216129" description="UPF0157 protein PA4798">
    <location>
        <begin position="1"/>
        <end position="242"/>
    </location>
</feature>
<feature type="region of interest" description="Disordered" evidence="1">
    <location>
        <begin position="215"/>
        <end position="242"/>
    </location>
</feature>